<dbReference type="EC" id="3.1.11.6" evidence="1"/>
<dbReference type="EMBL" id="AP008937">
    <property type="protein sequence ID" value="BAG27597.1"/>
    <property type="molecule type" value="Genomic_DNA"/>
</dbReference>
<dbReference type="RefSeq" id="WP_003683813.1">
    <property type="nucleotide sequence ID" value="NC_010610.1"/>
</dbReference>
<dbReference type="SMR" id="B2GD65"/>
<dbReference type="KEGG" id="lfe:LAF_1261"/>
<dbReference type="HOGENOM" id="CLU_145918_3_2_9"/>
<dbReference type="Proteomes" id="UP000001697">
    <property type="component" value="Chromosome"/>
</dbReference>
<dbReference type="GO" id="GO:0005829">
    <property type="term" value="C:cytosol"/>
    <property type="evidence" value="ECO:0007669"/>
    <property type="project" value="TreeGrafter"/>
</dbReference>
<dbReference type="GO" id="GO:0009318">
    <property type="term" value="C:exodeoxyribonuclease VII complex"/>
    <property type="evidence" value="ECO:0007669"/>
    <property type="project" value="InterPro"/>
</dbReference>
<dbReference type="GO" id="GO:0008855">
    <property type="term" value="F:exodeoxyribonuclease VII activity"/>
    <property type="evidence" value="ECO:0007669"/>
    <property type="project" value="UniProtKB-UniRule"/>
</dbReference>
<dbReference type="GO" id="GO:0006308">
    <property type="term" value="P:DNA catabolic process"/>
    <property type="evidence" value="ECO:0007669"/>
    <property type="project" value="UniProtKB-UniRule"/>
</dbReference>
<dbReference type="Gene3D" id="1.10.287.1040">
    <property type="entry name" value="Exonuclease VII, small subunit"/>
    <property type="match status" value="1"/>
</dbReference>
<dbReference type="HAMAP" id="MF_00337">
    <property type="entry name" value="Exonuc_7_S"/>
    <property type="match status" value="1"/>
</dbReference>
<dbReference type="InterPro" id="IPR003761">
    <property type="entry name" value="Exonuc_VII_S"/>
</dbReference>
<dbReference type="InterPro" id="IPR037004">
    <property type="entry name" value="Exonuc_VII_ssu_sf"/>
</dbReference>
<dbReference type="NCBIfam" id="NF002138">
    <property type="entry name" value="PRK00977.1-2"/>
    <property type="match status" value="1"/>
</dbReference>
<dbReference type="NCBIfam" id="TIGR01280">
    <property type="entry name" value="xseB"/>
    <property type="match status" value="1"/>
</dbReference>
<dbReference type="PANTHER" id="PTHR34137">
    <property type="entry name" value="EXODEOXYRIBONUCLEASE 7 SMALL SUBUNIT"/>
    <property type="match status" value="1"/>
</dbReference>
<dbReference type="PANTHER" id="PTHR34137:SF1">
    <property type="entry name" value="EXODEOXYRIBONUCLEASE 7 SMALL SUBUNIT"/>
    <property type="match status" value="1"/>
</dbReference>
<dbReference type="Pfam" id="PF02609">
    <property type="entry name" value="Exonuc_VII_S"/>
    <property type="match status" value="1"/>
</dbReference>
<dbReference type="SUPFAM" id="SSF116842">
    <property type="entry name" value="XseB-like"/>
    <property type="match status" value="1"/>
</dbReference>
<protein>
    <recommendedName>
        <fullName evidence="1">Exodeoxyribonuclease 7 small subunit</fullName>
        <ecNumber evidence="1">3.1.11.6</ecNumber>
    </recommendedName>
    <alternativeName>
        <fullName evidence="1">Exodeoxyribonuclease VII small subunit</fullName>
        <shortName evidence="1">Exonuclease VII small subunit</shortName>
    </alternativeName>
</protein>
<proteinExistence type="inferred from homology"/>
<keyword id="KW-0963">Cytoplasm</keyword>
<keyword id="KW-0269">Exonuclease</keyword>
<keyword id="KW-0378">Hydrolase</keyword>
<keyword id="KW-0540">Nuclease</keyword>
<keyword id="KW-1185">Reference proteome</keyword>
<feature type="chain" id="PRO_1000119934" description="Exodeoxyribonuclease 7 small subunit">
    <location>
        <begin position="1"/>
        <end position="97"/>
    </location>
</feature>
<feature type="region of interest" description="Disordered" evidence="2">
    <location>
        <begin position="64"/>
        <end position="97"/>
    </location>
</feature>
<feature type="compositionally biased region" description="Polar residues" evidence="2">
    <location>
        <begin position="77"/>
        <end position="88"/>
    </location>
</feature>
<comment type="function">
    <text evidence="1">Bidirectionally degrades single-stranded DNA into large acid-insoluble oligonucleotides, which are then degraded further into small acid-soluble oligonucleotides.</text>
</comment>
<comment type="catalytic activity">
    <reaction evidence="1">
        <text>Exonucleolytic cleavage in either 5'- to 3'- or 3'- to 5'-direction to yield nucleoside 5'-phosphates.</text>
        <dbReference type="EC" id="3.1.11.6"/>
    </reaction>
</comment>
<comment type="subunit">
    <text evidence="1">Heterooligomer composed of large and small subunits.</text>
</comment>
<comment type="subcellular location">
    <subcellularLocation>
        <location evidence="1">Cytoplasm</location>
    </subcellularLocation>
</comment>
<comment type="similarity">
    <text evidence="1">Belongs to the XseB family.</text>
</comment>
<reference key="1">
    <citation type="journal article" date="2008" name="DNA Res.">
        <title>Comparative genome analysis of Lactobacillus reuteri and Lactobacillus fermentum reveal a genomic island for reuterin and cobalamin production.</title>
        <authorList>
            <person name="Morita H."/>
            <person name="Toh H."/>
            <person name="Fukuda S."/>
            <person name="Horikawa H."/>
            <person name="Oshima K."/>
            <person name="Suzuki T."/>
            <person name="Murakami M."/>
            <person name="Hisamatsu S."/>
            <person name="Kato Y."/>
            <person name="Takizawa T."/>
            <person name="Fukuoka H."/>
            <person name="Yoshimura T."/>
            <person name="Itoh K."/>
            <person name="O'Sullivan D.J."/>
            <person name="McKay L.L."/>
            <person name="Ohno H."/>
            <person name="Kikuchi J."/>
            <person name="Masaoka T."/>
            <person name="Hattori M."/>
        </authorList>
    </citation>
    <scope>NUCLEOTIDE SEQUENCE [LARGE SCALE GENOMIC DNA]</scope>
    <source>
        <strain>NBRC 3956 / LMG 18251</strain>
    </source>
</reference>
<name>EX7S_LIMF3</name>
<gene>
    <name evidence="1" type="primary">xseB</name>
    <name type="ordered locus">LAF_1261</name>
</gene>
<evidence type="ECO:0000255" key="1">
    <source>
        <dbReference type="HAMAP-Rule" id="MF_00337"/>
    </source>
</evidence>
<evidence type="ECO:0000256" key="2">
    <source>
        <dbReference type="SAM" id="MobiDB-lite"/>
    </source>
</evidence>
<accession>B2GD65</accession>
<sequence>MASQPKSFEEQLAKLQEIVTKLQQGNVSLNDSIELFKEGMTLSNDLKGQLNEAETTLAQMMDENGQLHPAEEKGDDVSNNGVQNQGYKSQFLDGDVF</sequence>
<organism>
    <name type="scientific">Limosilactobacillus fermentum (strain NBRC 3956 / LMG 18251)</name>
    <name type="common">Lactobacillus fermentum</name>
    <dbReference type="NCBI Taxonomy" id="334390"/>
    <lineage>
        <taxon>Bacteria</taxon>
        <taxon>Bacillati</taxon>
        <taxon>Bacillota</taxon>
        <taxon>Bacilli</taxon>
        <taxon>Lactobacillales</taxon>
        <taxon>Lactobacillaceae</taxon>
        <taxon>Limosilactobacillus</taxon>
    </lineage>
</organism>